<comment type="alternative products">
    <event type="alternative splicing"/>
    <isoform>
        <id>Q5PNS0-1</id>
        <name>1</name>
        <sequence type="displayed"/>
    </isoform>
    <text>A number of isoforms are produced. According to EST sequences.</text>
</comment>
<comment type="sequence caution" evidence="3">
    <conflict type="erroneous gene model prediction">
        <sequence resource="EMBL-CDS" id="BAB02808"/>
    </conflict>
    <text>The predicted gene At3g20270 has been split into 2 genes: At3g20270 and At3g20280.</text>
</comment>
<protein>
    <recommendedName>
        <fullName>PHD finger protein At3g20280</fullName>
    </recommendedName>
</protein>
<sequence>MHYSQTSSFGGNHTEIAKIIHKFLQPRVKQYPLWNPPSREYMSRAMACQICEVTINEMDTLLICDACEKAYHLKCLQGNNMKGVPKSEWHCSRCVQAFNGKPFPPTYGRATRAVATTTAKMPFRAAGVLSSSAKKIGPMDIKANQQKPIVSTFSRLQNTGLVSGAATTSQFESASVNAKTTASAAKTTNIGSQGSKENVACGANSPAPVSLTETPNRTGIASTISVINNGLISKPLTPVGTMSSTSPLPVVNQLPVNATSNASPSTPITASLVAQAPTVTQNGDGSSTASGTADHSILNADITTQVHTLTVTSSSNSQQAVSHSEVAKATEDAAPLENVSECEKPSESTSHPDSLNDKTISENVQESSKDAKVDSEACQNHPTASPATVVPDQDSTITAAPSVTQEDSAFNTEKTPPQPLSVSSNYDSQTEKETPNVQDSVHNVPGDSEKGKGLNGLDDRHQEQPSEPEFYKSDSVKEENAA</sequence>
<dbReference type="EMBL" id="AB024036">
    <property type="protein sequence ID" value="BAB02808.1"/>
    <property type="status" value="ALT_SEQ"/>
    <property type="molecule type" value="Genomic_DNA"/>
</dbReference>
<dbReference type="EMBL" id="CP002686">
    <property type="protein sequence ID" value="AEE76358.1"/>
    <property type="molecule type" value="Genomic_DNA"/>
</dbReference>
<dbReference type="EMBL" id="BT020377">
    <property type="protein sequence ID" value="AAV85732.1"/>
    <property type="molecule type" value="mRNA"/>
</dbReference>
<dbReference type="RefSeq" id="NP_566656.3">
    <molecule id="Q5PNS0-1"/>
    <property type="nucleotide sequence ID" value="NM_112919.3"/>
</dbReference>
<dbReference type="ComplexPortal" id="CPX-7727">
    <property type="entry name" value="MINU1/2-associated SWI/SNF ATP-dependent chromatin remodeling complex"/>
</dbReference>
<dbReference type="FunCoup" id="Q5PNS0">
    <property type="interactions" value="22"/>
</dbReference>
<dbReference type="PaxDb" id="3702-AT3G20280.1"/>
<dbReference type="ProteomicsDB" id="234655">
    <molecule id="Q5PNS0-1"/>
</dbReference>
<dbReference type="EnsemblPlants" id="AT3G20280.2">
    <molecule id="Q5PNS0-1"/>
    <property type="protein sequence ID" value="AT3G20280.2"/>
    <property type="gene ID" value="AT3G20280"/>
</dbReference>
<dbReference type="GeneID" id="821572"/>
<dbReference type="Gramene" id="AT3G20280.2">
    <molecule id="Q5PNS0-1"/>
    <property type="protein sequence ID" value="AT3G20280.2"/>
    <property type="gene ID" value="AT3G20280"/>
</dbReference>
<dbReference type="KEGG" id="ath:AT3G20280"/>
<dbReference type="Araport" id="AT3G20280"/>
<dbReference type="TAIR" id="AT3G20280"/>
<dbReference type="eggNOG" id="ENOG502QT38">
    <property type="taxonomic scope" value="Eukaryota"/>
</dbReference>
<dbReference type="HOGENOM" id="CLU_566665_0_0_1"/>
<dbReference type="InParanoid" id="Q5PNS0"/>
<dbReference type="PhylomeDB" id="Q5PNS0"/>
<dbReference type="PRO" id="PR:Q5PNS0"/>
<dbReference type="Proteomes" id="UP000006548">
    <property type="component" value="Chromosome 3"/>
</dbReference>
<dbReference type="ExpressionAtlas" id="Q5PNS0">
    <property type="expression patterns" value="baseline and differential"/>
</dbReference>
<dbReference type="GO" id="GO:0008270">
    <property type="term" value="F:zinc ion binding"/>
    <property type="evidence" value="ECO:0007669"/>
    <property type="project" value="UniProtKB-KW"/>
</dbReference>
<dbReference type="Gene3D" id="3.30.40.10">
    <property type="entry name" value="Zinc/RING finger domain, C3HC4 (zinc finger)"/>
    <property type="match status" value="1"/>
</dbReference>
<dbReference type="InterPro" id="IPR019786">
    <property type="entry name" value="Zinc_finger_PHD-type_CS"/>
</dbReference>
<dbReference type="InterPro" id="IPR011011">
    <property type="entry name" value="Znf_FYVE_PHD"/>
</dbReference>
<dbReference type="InterPro" id="IPR001965">
    <property type="entry name" value="Znf_PHD"/>
</dbReference>
<dbReference type="InterPro" id="IPR019787">
    <property type="entry name" value="Znf_PHD-finger"/>
</dbReference>
<dbReference type="InterPro" id="IPR013083">
    <property type="entry name" value="Znf_RING/FYVE/PHD"/>
</dbReference>
<dbReference type="PANTHER" id="PTHR47527:SF5">
    <property type="entry name" value="PHD-TYPE DOMAIN-CONTAINING PROTEIN"/>
    <property type="match status" value="1"/>
</dbReference>
<dbReference type="PANTHER" id="PTHR47527">
    <property type="entry name" value="RING/FYVE/PHD ZINC FINGER SUPERFAMILY PROTEIN"/>
    <property type="match status" value="1"/>
</dbReference>
<dbReference type="Pfam" id="PF00628">
    <property type="entry name" value="PHD"/>
    <property type="match status" value="1"/>
</dbReference>
<dbReference type="SMART" id="SM00249">
    <property type="entry name" value="PHD"/>
    <property type="match status" value="1"/>
</dbReference>
<dbReference type="SUPFAM" id="SSF57903">
    <property type="entry name" value="FYVE/PHD zinc finger"/>
    <property type="match status" value="1"/>
</dbReference>
<dbReference type="PROSITE" id="PS01359">
    <property type="entry name" value="ZF_PHD_1"/>
    <property type="match status" value="1"/>
</dbReference>
<dbReference type="PROSITE" id="PS50016">
    <property type="entry name" value="ZF_PHD_2"/>
    <property type="match status" value="1"/>
</dbReference>
<keyword id="KW-0025">Alternative splicing</keyword>
<keyword id="KW-0479">Metal-binding</keyword>
<keyword id="KW-1185">Reference proteome</keyword>
<keyword id="KW-0862">Zinc</keyword>
<keyword id="KW-0863">Zinc-finger</keyword>
<reference key="1">
    <citation type="journal article" date="2000" name="DNA Res.">
        <title>Structural analysis of Arabidopsis thaliana chromosome 3. I. Sequence features of the regions of 4,504,864 bp covered by sixty P1 and TAC clones.</title>
        <authorList>
            <person name="Sato S."/>
            <person name="Nakamura Y."/>
            <person name="Kaneko T."/>
            <person name="Katoh T."/>
            <person name="Asamizu E."/>
            <person name="Tabata S."/>
        </authorList>
    </citation>
    <scope>NUCLEOTIDE SEQUENCE [LARGE SCALE GENOMIC DNA]</scope>
    <source>
        <strain>cv. Columbia</strain>
    </source>
</reference>
<reference key="2">
    <citation type="journal article" date="2017" name="Plant J.">
        <title>Araport11: a complete reannotation of the Arabidopsis thaliana reference genome.</title>
        <authorList>
            <person name="Cheng C.Y."/>
            <person name="Krishnakumar V."/>
            <person name="Chan A.P."/>
            <person name="Thibaud-Nissen F."/>
            <person name="Schobel S."/>
            <person name="Town C.D."/>
        </authorList>
    </citation>
    <scope>GENOME REANNOTATION</scope>
    <source>
        <strain>cv. Columbia</strain>
    </source>
</reference>
<reference key="3">
    <citation type="submission" date="2004-12" db="EMBL/GenBank/DDBJ databases">
        <title>Arabidopsis ORF clones.</title>
        <authorList>
            <person name="Cheuk R.F."/>
            <person name="Chen H."/>
            <person name="Kim C.J."/>
            <person name="Shinn P."/>
            <person name="Ecker J.R."/>
        </authorList>
    </citation>
    <scope>NUCLEOTIDE SEQUENCE [LARGE SCALE MRNA]</scope>
    <source>
        <strain>cv. Columbia</strain>
    </source>
</reference>
<proteinExistence type="evidence at transcript level"/>
<accession>Q5PNS0</accession>
<accession>Q9LTR5</accession>
<gene>
    <name type="ordered locus">At3g20280</name>
    <name type="ORF">MQC12.2</name>
</gene>
<name>Y3228_ARATH</name>
<organism>
    <name type="scientific">Arabidopsis thaliana</name>
    <name type="common">Mouse-ear cress</name>
    <dbReference type="NCBI Taxonomy" id="3702"/>
    <lineage>
        <taxon>Eukaryota</taxon>
        <taxon>Viridiplantae</taxon>
        <taxon>Streptophyta</taxon>
        <taxon>Embryophyta</taxon>
        <taxon>Tracheophyta</taxon>
        <taxon>Spermatophyta</taxon>
        <taxon>Magnoliopsida</taxon>
        <taxon>eudicotyledons</taxon>
        <taxon>Gunneridae</taxon>
        <taxon>Pentapetalae</taxon>
        <taxon>rosids</taxon>
        <taxon>malvids</taxon>
        <taxon>Brassicales</taxon>
        <taxon>Brassicaceae</taxon>
        <taxon>Camelineae</taxon>
        <taxon>Arabidopsis</taxon>
    </lineage>
</organism>
<evidence type="ECO:0000255" key="1">
    <source>
        <dbReference type="PROSITE-ProRule" id="PRU00146"/>
    </source>
</evidence>
<evidence type="ECO:0000256" key="2">
    <source>
        <dbReference type="SAM" id="MobiDB-lite"/>
    </source>
</evidence>
<evidence type="ECO:0000305" key="3"/>
<feature type="chain" id="PRO_0000274931" description="PHD finger protein At3g20280">
    <location>
        <begin position="1"/>
        <end position="482"/>
    </location>
</feature>
<feature type="zinc finger region" description="PHD-type" evidence="1">
    <location>
        <begin position="45"/>
        <end position="97"/>
    </location>
</feature>
<feature type="region of interest" description="Disordered" evidence="2">
    <location>
        <begin position="188"/>
        <end position="210"/>
    </location>
</feature>
<feature type="region of interest" description="Disordered" evidence="2">
    <location>
        <begin position="314"/>
        <end position="482"/>
    </location>
</feature>
<feature type="compositionally biased region" description="Low complexity" evidence="2">
    <location>
        <begin position="314"/>
        <end position="324"/>
    </location>
</feature>
<feature type="compositionally biased region" description="Polar residues" evidence="2">
    <location>
        <begin position="377"/>
        <end position="386"/>
    </location>
</feature>
<feature type="compositionally biased region" description="Polar residues" evidence="2">
    <location>
        <begin position="393"/>
        <end position="428"/>
    </location>
</feature>
<feature type="compositionally biased region" description="Basic and acidic residues" evidence="2">
    <location>
        <begin position="447"/>
        <end position="482"/>
    </location>
</feature>